<sequence>MGGSKMSNDYEIDVEAGMSSLSIVNTPIEAPIVSSYNDRIRPLLDTVDRLRNLNVMREGIQLPTIVVVGDQSSGKSSVLESLAGINLPRGQGICTRVPLVMRLQRSSSPEPEIWLEYSDKVVPTDEEHVAEAICAATDVIAGTGEGVSDTPLTLSVKKNNVPDLTMVDLPGITRVPVNGQPENIYEQISRMIMKYIEPQESIILNVLSATVDFTTCESIRMSRQVDKTGERTLAVVTKADMAPEGLLQKVTADDVSIGLGYICVRNRIGEETYEEARVQEDLLFRTHPLLSLIDGDIVGIL</sequence>
<protein>
    <recommendedName>
        <fullName>Putative dynamin-related protein 4A</fullName>
    </recommendedName>
</protein>
<gene>
    <name type="primary">DRP4A</name>
    <name type="ordered locus">At1g60530</name>
    <name type="ORF">F8A5.7</name>
</gene>
<organism>
    <name type="scientific">Arabidopsis thaliana</name>
    <name type="common">Mouse-ear cress</name>
    <dbReference type="NCBI Taxonomy" id="3702"/>
    <lineage>
        <taxon>Eukaryota</taxon>
        <taxon>Viridiplantae</taxon>
        <taxon>Streptophyta</taxon>
        <taxon>Embryophyta</taxon>
        <taxon>Tracheophyta</taxon>
        <taxon>Spermatophyta</taxon>
        <taxon>Magnoliopsida</taxon>
        <taxon>eudicotyledons</taxon>
        <taxon>Gunneridae</taxon>
        <taxon>Pentapetalae</taxon>
        <taxon>rosids</taxon>
        <taxon>malvids</taxon>
        <taxon>Brassicales</taxon>
        <taxon>Brassicaceae</taxon>
        <taxon>Camelineae</taxon>
        <taxon>Arabidopsis</taxon>
    </lineage>
</organism>
<keyword id="KW-0342">GTP-binding</keyword>
<keyword id="KW-0547">Nucleotide-binding</keyword>
<keyword id="KW-1185">Reference proteome</keyword>
<comment type="similarity">
    <text evidence="2">Belongs to the TRAFAC class dynamin-like GTPase superfamily. Dynamin/Fzo/YdjA family.</text>
</comment>
<comment type="caution">
    <text evidence="3">Could be the product of a pseudogene. Lacks the GED domain, which is a conserved feature of the family.</text>
</comment>
<proteinExistence type="uncertain"/>
<accession>Q9ZP56</accession>
<reference key="1">
    <citation type="journal article" date="2000" name="Nature">
        <title>Sequence and analysis of chromosome 1 of the plant Arabidopsis thaliana.</title>
        <authorList>
            <person name="Theologis A."/>
            <person name="Ecker J.R."/>
            <person name="Palm C.J."/>
            <person name="Federspiel N.A."/>
            <person name="Kaul S."/>
            <person name="White O."/>
            <person name="Alonso J."/>
            <person name="Altafi H."/>
            <person name="Araujo R."/>
            <person name="Bowman C.L."/>
            <person name="Brooks S.Y."/>
            <person name="Buehler E."/>
            <person name="Chan A."/>
            <person name="Chao Q."/>
            <person name="Chen H."/>
            <person name="Cheuk R.F."/>
            <person name="Chin C.W."/>
            <person name="Chung M.K."/>
            <person name="Conn L."/>
            <person name="Conway A.B."/>
            <person name="Conway A.R."/>
            <person name="Creasy T.H."/>
            <person name="Dewar K."/>
            <person name="Dunn P."/>
            <person name="Etgu P."/>
            <person name="Feldblyum T.V."/>
            <person name="Feng J.-D."/>
            <person name="Fong B."/>
            <person name="Fujii C.Y."/>
            <person name="Gill J.E."/>
            <person name="Goldsmith A.D."/>
            <person name="Haas B."/>
            <person name="Hansen N.F."/>
            <person name="Hughes B."/>
            <person name="Huizar L."/>
            <person name="Hunter J.L."/>
            <person name="Jenkins J."/>
            <person name="Johnson-Hopson C."/>
            <person name="Khan S."/>
            <person name="Khaykin E."/>
            <person name="Kim C.J."/>
            <person name="Koo H.L."/>
            <person name="Kremenetskaia I."/>
            <person name="Kurtz D.B."/>
            <person name="Kwan A."/>
            <person name="Lam B."/>
            <person name="Langin-Hooper S."/>
            <person name="Lee A."/>
            <person name="Lee J.M."/>
            <person name="Lenz C.A."/>
            <person name="Li J.H."/>
            <person name="Li Y.-P."/>
            <person name="Lin X."/>
            <person name="Liu S.X."/>
            <person name="Liu Z.A."/>
            <person name="Luros J.S."/>
            <person name="Maiti R."/>
            <person name="Marziali A."/>
            <person name="Militscher J."/>
            <person name="Miranda M."/>
            <person name="Nguyen M."/>
            <person name="Nierman W.C."/>
            <person name="Osborne B.I."/>
            <person name="Pai G."/>
            <person name="Peterson J."/>
            <person name="Pham P.K."/>
            <person name="Rizzo M."/>
            <person name="Rooney T."/>
            <person name="Rowley D."/>
            <person name="Sakano H."/>
            <person name="Salzberg S.L."/>
            <person name="Schwartz J.R."/>
            <person name="Shinn P."/>
            <person name="Southwick A.M."/>
            <person name="Sun H."/>
            <person name="Tallon L.J."/>
            <person name="Tambunga G."/>
            <person name="Toriumi M.J."/>
            <person name="Town C.D."/>
            <person name="Utterback T."/>
            <person name="Van Aken S."/>
            <person name="Vaysberg M."/>
            <person name="Vysotskaia V.S."/>
            <person name="Walker M."/>
            <person name="Wu D."/>
            <person name="Yu G."/>
            <person name="Fraser C.M."/>
            <person name="Venter J.C."/>
            <person name="Davis R.W."/>
        </authorList>
    </citation>
    <scope>NUCLEOTIDE SEQUENCE [LARGE SCALE GENOMIC DNA]</scope>
    <source>
        <strain>cv. Columbia</strain>
    </source>
</reference>
<reference key="2">
    <citation type="journal article" date="2017" name="Plant J.">
        <title>Araport11: a complete reannotation of the Arabidopsis thaliana reference genome.</title>
        <authorList>
            <person name="Cheng C.Y."/>
            <person name="Krishnakumar V."/>
            <person name="Chan A.P."/>
            <person name="Thibaud-Nissen F."/>
            <person name="Schobel S."/>
            <person name="Town C.D."/>
        </authorList>
    </citation>
    <scope>GENOME REANNOTATION</scope>
    <source>
        <strain>cv. Columbia</strain>
    </source>
</reference>
<reference key="3">
    <citation type="journal article" date="2003" name="Plant Mol. Biol.">
        <title>A unified nomenclature for Arabidopsis dynamin-related large GTPases based on homology and possible functions.</title>
        <authorList>
            <person name="Hong Z."/>
            <person name="Bednarek S.Y."/>
            <person name="Blumwald E."/>
            <person name="Hwang I."/>
            <person name="Jurgens G."/>
            <person name="Menzel D."/>
            <person name="Osteryoung K.W."/>
            <person name="Raikhel N.V."/>
            <person name="Shinozaki K."/>
            <person name="Tsutsumi N."/>
            <person name="Verma D.P.S."/>
        </authorList>
    </citation>
    <scope>GENE FAMILY</scope>
    <scope>NOMENCLATURE</scope>
</reference>
<evidence type="ECO:0000250" key="1"/>
<evidence type="ECO:0000255" key="2">
    <source>
        <dbReference type="PROSITE-ProRule" id="PRU01055"/>
    </source>
</evidence>
<evidence type="ECO:0000305" key="3"/>
<feature type="chain" id="PRO_0000415906" description="Putative dynamin-related protein 4A">
    <location>
        <begin position="1"/>
        <end position="301"/>
    </location>
</feature>
<feature type="domain" description="Dynamin-type G" evidence="2">
    <location>
        <begin position="59"/>
        <end position="301"/>
    </location>
</feature>
<feature type="region of interest" description="G1 motif" evidence="2">
    <location>
        <begin position="69"/>
        <end position="76"/>
    </location>
</feature>
<feature type="region of interest" description="G2 motif" evidence="2">
    <location>
        <begin position="94"/>
        <end position="96"/>
    </location>
</feature>
<feature type="region of interest" description="G3 motif" evidence="2">
    <location>
        <begin position="168"/>
        <end position="171"/>
    </location>
</feature>
<feature type="region of interest" description="G4 motif" evidence="2">
    <location>
        <begin position="237"/>
        <end position="240"/>
    </location>
</feature>
<feature type="region of interest" description="G5 motif" evidence="2">
    <location>
        <position position="270"/>
    </location>
</feature>
<feature type="binding site" evidence="1">
    <location>
        <begin position="69"/>
        <end position="76"/>
    </location>
    <ligand>
        <name>GTP</name>
        <dbReference type="ChEBI" id="CHEBI:37565"/>
    </ligand>
</feature>
<feature type="binding site" evidence="1">
    <location>
        <begin position="168"/>
        <end position="172"/>
    </location>
    <ligand>
        <name>GTP</name>
        <dbReference type="ChEBI" id="CHEBI:37565"/>
    </ligand>
</feature>
<feature type="binding site" evidence="1">
    <location>
        <begin position="237"/>
        <end position="240"/>
    </location>
    <ligand>
        <name>GTP</name>
        <dbReference type="ChEBI" id="CHEBI:37565"/>
    </ligand>
</feature>
<dbReference type="EMBL" id="AC002292">
    <property type="protein sequence ID" value="AAB71957.1"/>
    <property type="molecule type" value="Genomic_DNA"/>
</dbReference>
<dbReference type="EMBL" id="CP002684">
    <property type="protein sequence ID" value="AEE33695.1"/>
    <property type="molecule type" value="Genomic_DNA"/>
</dbReference>
<dbReference type="PIR" id="E96630">
    <property type="entry name" value="E96630"/>
</dbReference>
<dbReference type="RefSeq" id="NP_176253.1">
    <property type="nucleotide sequence ID" value="NM_104737.1"/>
</dbReference>
<dbReference type="SMR" id="Q9ZP56"/>
<dbReference type="STRING" id="3702.Q9ZP56"/>
<dbReference type="PaxDb" id="3702-AT1G60530.1"/>
<dbReference type="ProteomicsDB" id="224368"/>
<dbReference type="EnsemblPlants" id="AT1G60530.1">
    <property type="protein sequence ID" value="AT1G60530.1"/>
    <property type="gene ID" value="AT1G60530"/>
</dbReference>
<dbReference type="GeneID" id="842348"/>
<dbReference type="Gramene" id="AT1G60530.1">
    <property type="protein sequence ID" value="AT1G60530.1"/>
    <property type="gene ID" value="AT1G60530"/>
</dbReference>
<dbReference type="KEGG" id="ath:AT1G60530"/>
<dbReference type="Araport" id="AT1G60530"/>
<dbReference type="TAIR" id="AT1G60530">
    <property type="gene designation" value="DRP4A"/>
</dbReference>
<dbReference type="eggNOG" id="KOG0446">
    <property type="taxonomic scope" value="Eukaryota"/>
</dbReference>
<dbReference type="HOGENOM" id="CLU_008964_3_2_1"/>
<dbReference type="InParanoid" id="Q9ZP56"/>
<dbReference type="OMA" id="ISHEEWA"/>
<dbReference type="PhylomeDB" id="Q9ZP56"/>
<dbReference type="Proteomes" id="UP000006548">
    <property type="component" value="Chromosome 1"/>
</dbReference>
<dbReference type="ExpressionAtlas" id="Q9ZP56">
    <property type="expression patterns" value="baseline and differential"/>
</dbReference>
<dbReference type="GO" id="GO:0005737">
    <property type="term" value="C:cytoplasm"/>
    <property type="evidence" value="ECO:0007669"/>
    <property type="project" value="UniProtKB-ARBA"/>
</dbReference>
<dbReference type="GO" id="GO:0005525">
    <property type="term" value="F:GTP binding"/>
    <property type="evidence" value="ECO:0007669"/>
    <property type="project" value="UniProtKB-KW"/>
</dbReference>
<dbReference type="GO" id="GO:0003924">
    <property type="term" value="F:GTPase activity"/>
    <property type="evidence" value="ECO:0007669"/>
    <property type="project" value="InterPro"/>
</dbReference>
<dbReference type="CDD" id="cd08771">
    <property type="entry name" value="DLP_1"/>
    <property type="match status" value="1"/>
</dbReference>
<dbReference type="FunFam" id="3.40.50.300:FF:001237">
    <property type="entry name" value="Dynamin-related protein 4C"/>
    <property type="match status" value="1"/>
</dbReference>
<dbReference type="Gene3D" id="3.40.50.300">
    <property type="entry name" value="P-loop containing nucleotide triphosphate hydrolases"/>
    <property type="match status" value="1"/>
</dbReference>
<dbReference type="InterPro" id="IPR022812">
    <property type="entry name" value="Dynamin"/>
</dbReference>
<dbReference type="InterPro" id="IPR001401">
    <property type="entry name" value="Dynamin_GTPase"/>
</dbReference>
<dbReference type="InterPro" id="IPR045063">
    <property type="entry name" value="Dynamin_N"/>
</dbReference>
<dbReference type="InterPro" id="IPR000375">
    <property type="entry name" value="Dynamin_stalk"/>
</dbReference>
<dbReference type="InterPro" id="IPR030381">
    <property type="entry name" value="G_DYNAMIN_dom"/>
</dbReference>
<dbReference type="InterPro" id="IPR027417">
    <property type="entry name" value="P-loop_NTPase"/>
</dbReference>
<dbReference type="PANTHER" id="PTHR11566">
    <property type="entry name" value="DYNAMIN"/>
    <property type="match status" value="1"/>
</dbReference>
<dbReference type="PANTHER" id="PTHR11566:SF173">
    <property type="entry name" value="DYNAMIN-RELATED PROTEIN 4C"/>
    <property type="match status" value="1"/>
</dbReference>
<dbReference type="Pfam" id="PF01031">
    <property type="entry name" value="Dynamin_M"/>
    <property type="match status" value="1"/>
</dbReference>
<dbReference type="Pfam" id="PF00350">
    <property type="entry name" value="Dynamin_N"/>
    <property type="match status" value="1"/>
</dbReference>
<dbReference type="PRINTS" id="PR00195">
    <property type="entry name" value="DYNAMIN"/>
</dbReference>
<dbReference type="SMART" id="SM00053">
    <property type="entry name" value="DYNc"/>
    <property type="match status" value="1"/>
</dbReference>
<dbReference type="SUPFAM" id="SSF52540">
    <property type="entry name" value="P-loop containing nucleoside triphosphate hydrolases"/>
    <property type="match status" value="1"/>
</dbReference>
<dbReference type="PROSITE" id="PS51718">
    <property type="entry name" value="G_DYNAMIN_2"/>
    <property type="match status" value="1"/>
</dbReference>
<name>DRP4A_ARATH</name>